<accession>A8WGA3</accession>
<name>LFN1L_DANRE</name>
<evidence type="ECO:0000250" key="1"/>
<evidence type="ECO:0000255" key="2"/>
<evidence type="ECO:0000255" key="3">
    <source>
        <dbReference type="PROSITE-ProRule" id="PRU00114"/>
    </source>
</evidence>
<evidence type="ECO:0000255" key="4">
    <source>
        <dbReference type="PROSITE-ProRule" id="PRU00316"/>
    </source>
</evidence>
<evidence type="ECO:0000256" key="5">
    <source>
        <dbReference type="SAM" id="MobiDB-lite"/>
    </source>
</evidence>
<evidence type="ECO:0000305" key="6"/>
<organism>
    <name type="scientific">Danio rerio</name>
    <name type="common">Zebrafish</name>
    <name type="synonym">Brachydanio rerio</name>
    <dbReference type="NCBI Taxonomy" id="7955"/>
    <lineage>
        <taxon>Eukaryota</taxon>
        <taxon>Metazoa</taxon>
        <taxon>Chordata</taxon>
        <taxon>Craniata</taxon>
        <taxon>Vertebrata</taxon>
        <taxon>Euteleostomi</taxon>
        <taxon>Actinopterygii</taxon>
        <taxon>Neopterygii</taxon>
        <taxon>Teleostei</taxon>
        <taxon>Ostariophysi</taxon>
        <taxon>Cypriniformes</taxon>
        <taxon>Danionidae</taxon>
        <taxon>Danioninae</taxon>
        <taxon>Danio</taxon>
    </lineage>
</organism>
<proteinExistence type="evidence at transcript level"/>
<sequence length="687" mass="75776">MEWLIFSLLLLAVSASGQLCPKRCMCQNLSPSLAILCAKTGLLFVPTVIDRRTVELRLTENFITAVKRRDFANMTSLLHLTLSRNTISQIMPYTFADLKRLRALHLDSNRLSVITDDHFRGLTNLRHLILANNQLHNISPHAFDDFLGTLEDLDLSYNNLVDIPWDTIGRLTNVNTLNMDHNLIEHVPLGIFSNLHKLARLDMTSNKLKKIPPDPLFLRIPVYAKSKGSPLSSLVLSFGGNPLHCNCELLWLRRLTREDDLETCASPPDLTAKYFWTIPEEEFICDPPVITRKSPKTFAMEGQPTSLKCKANGDPDPDVHWISPEGRLIANTSRTLSFSNGSLEINITSLKDTGIFTCIASNAAGESTGTVELVVSPLPHLANSTNRIREPDPGPSDILTSAKSTSSVSNETRSQERKVVLAELSANSALIRWPSQQHFPGIRMYQIQYNSSVDDTLVYRMIPSTSFDFLVRDLVSGREYDLCVLAVYDDGVTSLTATRQVGCVTFVTETEFSQCQSLRSHFLGGTMIIIIGGIIVASVLVFIIILMIRYKVYSQHGADSGKGTAMTNVRSQTNGGQAAGQVPRSSSKIVEGQEASGGSLGGAANIKDSTALVLVTDSETAVQISEISSEDIVSPTQRHHPRTCIELKRRPSLSCKEGTSSDTQEDTASPQVSDEKKAQRDWSDFKI</sequence>
<dbReference type="EMBL" id="BC154635">
    <property type="protein sequence ID" value="AAI54636.1"/>
    <property type="molecule type" value="mRNA"/>
</dbReference>
<dbReference type="RefSeq" id="NP_001107121.1">
    <property type="nucleotide sequence ID" value="NM_001113649.1"/>
</dbReference>
<dbReference type="SMR" id="A8WGA3"/>
<dbReference type="FunCoup" id="A8WGA3">
    <property type="interactions" value="1127"/>
</dbReference>
<dbReference type="STRING" id="7955.ENSDARP00000137628"/>
<dbReference type="GlyCosmos" id="A8WGA3">
    <property type="glycosylation" value="7 sites, No reported glycans"/>
</dbReference>
<dbReference type="GeneID" id="100003690"/>
<dbReference type="KEGG" id="dre:100003690"/>
<dbReference type="AGR" id="ZFIN:ZDB-GENE-080219-38"/>
<dbReference type="ZFIN" id="ZDB-GENE-080219-38">
    <property type="gene designation" value="zgc:172282"/>
</dbReference>
<dbReference type="InParanoid" id="A8WGA3"/>
<dbReference type="OrthoDB" id="1394818at2759"/>
<dbReference type="PhylomeDB" id="A8WGA3"/>
<dbReference type="TreeFam" id="TF350185"/>
<dbReference type="PRO" id="PR:A8WGA3"/>
<dbReference type="Proteomes" id="UP000000437">
    <property type="component" value="Chromosome 15"/>
</dbReference>
<dbReference type="GO" id="GO:0016020">
    <property type="term" value="C:membrane"/>
    <property type="evidence" value="ECO:0007669"/>
    <property type="project" value="UniProtKB-SubCell"/>
</dbReference>
<dbReference type="GO" id="GO:0045202">
    <property type="term" value="C:synapse"/>
    <property type="evidence" value="ECO:0007669"/>
    <property type="project" value="UniProtKB-SubCell"/>
</dbReference>
<dbReference type="CDD" id="cd00063">
    <property type="entry name" value="FN3"/>
    <property type="match status" value="1"/>
</dbReference>
<dbReference type="FunFam" id="2.60.40.10:FF:000235">
    <property type="entry name" value="Leucine-rich repeat and fibronectin type III domain-containing 2"/>
    <property type="match status" value="1"/>
</dbReference>
<dbReference type="FunFam" id="2.60.40.10:FF:000091">
    <property type="entry name" value="Leucine-rich repeat and fibronectin type III domain-containing protein 1"/>
    <property type="match status" value="1"/>
</dbReference>
<dbReference type="FunFam" id="3.80.10.10:FF:000016">
    <property type="entry name" value="Leucine-rich repeat and fibronectin type III domain-containing protein 1"/>
    <property type="match status" value="1"/>
</dbReference>
<dbReference type="FunFam" id="3.80.10.10:FF:000019">
    <property type="entry name" value="leucine-rich repeat and fibronectin type III domain-containing protein 1"/>
    <property type="match status" value="1"/>
</dbReference>
<dbReference type="Gene3D" id="2.60.40.10">
    <property type="entry name" value="Immunoglobulins"/>
    <property type="match status" value="2"/>
</dbReference>
<dbReference type="Gene3D" id="3.80.10.10">
    <property type="entry name" value="Ribonuclease Inhibitor"/>
    <property type="match status" value="2"/>
</dbReference>
<dbReference type="InterPro" id="IPR000483">
    <property type="entry name" value="Cys-rich_flank_reg_C"/>
</dbReference>
<dbReference type="InterPro" id="IPR003961">
    <property type="entry name" value="FN3_dom"/>
</dbReference>
<dbReference type="InterPro" id="IPR036116">
    <property type="entry name" value="FN3_sf"/>
</dbReference>
<dbReference type="InterPro" id="IPR007110">
    <property type="entry name" value="Ig-like_dom"/>
</dbReference>
<dbReference type="InterPro" id="IPR036179">
    <property type="entry name" value="Ig-like_dom_sf"/>
</dbReference>
<dbReference type="InterPro" id="IPR013783">
    <property type="entry name" value="Ig-like_fold"/>
</dbReference>
<dbReference type="InterPro" id="IPR003599">
    <property type="entry name" value="Ig_sub"/>
</dbReference>
<dbReference type="InterPro" id="IPR003598">
    <property type="entry name" value="Ig_sub2"/>
</dbReference>
<dbReference type="InterPro" id="IPR001611">
    <property type="entry name" value="Leu-rich_rpt"/>
</dbReference>
<dbReference type="InterPro" id="IPR003591">
    <property type="entry name" value="Leu-rich_rpt_typical-subtyp"/>
</dbReference>
<dbReference type="InterPro" id="IPR050467">
    <property type="entry name" value="LRFN"/>
</dbReference>
<dbReference type="InterPro" id="IPR032675">
    <property type="entry name" value="LRR_dom_sf"/>
</dbReference>
<dbReference type="PANTHER" id="PTHR45842:SF20">
    <property type="entry name" value="LEUCINE-RICH REPEAT AND FIBRONECTIN TYPE III DOMAIN-CONTAINING PROTEIN 1-LIKE PROTEIN"/>
    <property type="match status" value="1"/>
</dbReference>
<dbReference type="PANTHER" id="PTHR45842">
    <property type="entry name" value="SYNAPTIC ADHESION-LIKE MOLECULE SALM"/>
    <property type="match status" value="1"/>
</dbReference>
<dbReference type="Pfam" id="PF13927">
    <property type="entry name" value="Ig_3"/>
    <property type="match status" value="1"/>
</dbReference>
<dbReference type="Pfam" id="PF00560">
    <property type="entry name" value="LRR_1"/>
    <property type="match status" value="1"/>
</dbReference>
<dbReference type="Pfam" id="PF13855">
    <property type="entry name" value="LRR_8"/>
    <property type="match status" value="2"/>
</dbReference>
<dbReference type="SMART" id="SM00409">
    <property type="entry name" value="IG"/>
    <property type="match status" value="1"/>
</dbReference>
<dbReference type="SMART" id="SM00408">
    <property type="entry name" value="IGc2"/>
    <property type="match status" value="1"/>
</dbReference>
<dbReference type="SMART" id="SM00369">
    <property type="entry name" value="LRR_TYP"/>
    <property type="match status" value="6"/>
</dbReference>
<dbReference type="SMART" id="SM00082">
    <property type="entry name" value="LRRCT"/>
    <property type="match status" value="1"/>
</dbReference>
<dbReference type="SUPFAM" id="SSF49265">
    <property type="entry name" value="Fibronectin type III"/>
    <property type="match status" value="1"/>
</dbReference>
<dbReference type="SUPFAM" id="SSF48726">
    <property type="entry name" value="Immunoglobulin"/>
    <property type="match status" value="1"/>
</dbReference>
<dbReference type="SUPFAM" id="SSF52058">
    <property type="entry name" value="L domain-like"/>
    <property type="match status" value="1"/>
</dbReference>
<dbReference type="PROSITE" id="PS50853">
    <property type="entry name" value="FN3"/>
    <property type="match status" value="1"/>
</dbReference>
<dbReference type="PROSITE" id="PS50835">
    <property type="entry name" value="IG_LIKE"/>
    <property type="match status" value="1"/>
</dbReference>
<dbReference type="PROSITE" id="PS51450">
    <property type="entry name" value="LRR"/>
    <property type="match status" value="6"/>
</dbReference>
<comment type="function">
    <text evidence="1">May be involved in the regulation of excitatory synapses.</text>
</comment>
<comment type="subcellular location">
    <subcellularLocation>
        <location evidence="1">Membrane</location>
        <topology evidence="1">Single-pass type I membrane protein</topology>
    </subcellularLocation>
    <subcellularLocation>
        <location evidence="1">Synapse</location>
    </subcellularLocation>
</comment>
<comment type="similarity">
    <text evidence="6">Belongs to the LRFN family.</text>
</comment>
<gene>
    <name type="primary">lrfn1l</name>
    <name type="ORF">zgc:172282</name>
</gene>
<protein>
    <recommendedName>
        <fullName>Leucine-rich repeat and fibronectin type III domain-containing protein 1-like protein</fullName>
    </recommendedName>
</protein>
<reference key="1">
    <citation type="submission" date="2007-11" db="EMBL/GenBank/DDBJ databases">
        <authorList>
            <consortium name="NIH - Zebrafish Gene Collection (ZGC) project"/>
        </authorList>
    </citation>
    <scope>NUCLEOTIDE SEQUENCE [LARGE SCALE MRNA]</scope>
    <source>
        <strain>WIK</strain>
    </source>
</reference>
<feature type="signal peptide" evidence="2">
    <location>
        <begin position="1"/>
        <end position="17"/>
    </location>
</feature>
<feature type="chain" id="PRO_0000334149" description="Leucine-rich repeat and fibronectin type III domain-containing protein 1-like protein">
    <location>
        <begin position="18"/>
        <end position="687"/>
    </location>
</feature>
<feature type="topological domain" description="Extracellular" evidence="2">
    <location>
        <begin position="18"/>
        <end position="527"/>
    </location>
</feature>
<feature type="transmembrane region" description="Helical" evidence="2">
    <location>
        <begin position="528"/>
        <end position="548"/>
    </location>
</feature>
<feature type="topological domain" description="Cytoplasmic" evidence="2">
    <location>
        <begin position="549"/>
        <end position="687"/>
    </location>
</feature>
<feature type="domain" description="LRRNT">
    <location>
        <begin position="18"/>
        <end position="51"/>
    </location>
</feature>
<feature type="repeat" description="LRR 1">
    <location>
        <begin position="52"/>
        <end position="73"/>
    </location>
</feature>
<feature type="repeat" description="LRR 2">
    <location>
        <begin position="76"/>
        <end position="97"/>
    </location>
</feature>
<feature type="repeat" description="LRR 3">
    <location>
        <begin position="100"/>
        <end position="121"/>
    </location>
</feature>
<feature type="repeat" description="LRR 4">
    <location>
        <begin position="124"/>
        <end position="145"/>
    </location>
</feature>
<feature type="repeat" description="LRR 5">
    <location>
        <begin position="149"/>
        <end position="170"/>
    </location>
</feature>
<feature type="repeat" description="LRR 6">
    <location>
        <begin position="173"/>
        <end position="194"/>
    </location>
</feature>
<feature type="repeat" description="LRR 7">
    <location>
        <begin position="197"/>
        <end position="218"/>
    </location>
</feature>
<feature type="domain" description="LRRCT">
    <location>
        <begin position="241"/>
        <end position="287"/>
    </location>
</feature>
<feature type="domain" description="Ig-like">
    <location>
        <begin position="287"/>
        <end position="376"/>
    </location>
</feature>
<feature type="domain" description="Fibronectin type-III" evidence="4">
    <location>
        <begin position="415"/>
        <end position="510"/>
    </location>
</feature>
<feature type="region of interest" description="Disordered" evidence="5">
    <location>
        <begin position="384"/>
        <end position="412"/>
    </location>
</feature>
<feature type="region of interest" description="Disordered" evidence="5">
    <location>
        <begin position="563"/>
        <end position="601"/>
    </location>
</feature>
<feature type="region of interest" description="Disordered" evidence="5">
    <location>
        <begin position="630"/>
        <end position="687"/>
    </location>
</feature>
<feature type="compositionally biased region" description="Polar residues" evidence="5">
    <location>
        <begin position="398"/>
        <end position="412"/>
    </location>
</feature>
<feature type="compositionally biased region" description="Polar residues" evidence="5">
    <location>
        <begin position="565"/>
        <end position="576"/>
    </location>
</feature>
<feature type="compositionally biased region" description="Polar residues" evidence="5">
    <location>
        <begin position="657"/>
        <end position="672"/>
    </location>
</feature>
<feature type="compositionally biased region" description="Basic and acidic residues" evidence="5">
    <location>
        <begin position="673"/>
        <end position="687"/>
    </location>
</feature>
<feature type="glycosylation site" description="N-linked (GlcNAc...) asparagine" evidence="2">
    <location>
        <position position="73"/>
    </location>
</feature>
<feature type="glycosylation site" description="N-linked (GlcNAc...) asparagine" evidence="2">
    <location>
        <position position="331"/>
    </location>
</feature>
<feature type="glycosylation site" description="N-linked (GlcNAc...) asparagine" evidence="2">
    <location>
        <position position="340"/>
    </location>
</feature>
<feature type="glycosylation site" description="N-linked (GlcNAc...) asparagine" evidence="2">
    <location>
        <position position="346"/>
    </location>
</feature>
<feature type="glycosylation site" description="N-linked (GlcNAc...) asparagine" evidence="2">
    <location>
        <position position="383"/>
    </location>
</feature>
<feature type="glycosylation site" description="N-linked (GlcNAc...) asparagine" evidence="2">
    <location>
        <position position="410"/>
    </location>
</feature>
<feature type="glycosylation site" description="N-linked (GlcNAc...) asparagine" evidence="2">
    <location>
        <position position="450"/>
    </location>
</feature>
<feature type="disulfide bond" evidence="3">
    <location>
        <begin position="309"/>
        <end position="358"/>
    </location>
</feature>
<keyword id="KW-1015">Disulfide bond</keyword>
<keyword id="KW-0325">Glycoprotein</keyword>
<keyword id="KW-0393">Immunoglobulin domain</keyword>
<keyword id="KW-0433">Leucine-rich repeat</keyword>
<keyword id="KW-0472">Membrane</keyword>
<keyword id="KW-1185">Reference proteome</keyword>
<keyword id="KW-0677">Repeat</keyword>
<keyword id="KW-0732">Signal</keyword>
<keyword id="KW-0770">Synapse</keyword>
<keyword id="KW-0812">Transmembrane</keyword>
<keyword id="KW-1133">Transmembrane helix</keyword>